<name>FER_PALPL</name>
<organism>
    <name type="scientific">Palmaria palmata</name>
    <name type="common">Dulse</name>
    <name type="synonym">Rhodymenia palmata</name>
    <dbReference type="NCBI Taxonomy" id="2822"/>
    <lineage>
        <taxon>Eukaryota</taxon>
        <taxon>Rhodophyta</taxon>
        <taxon>Florideophyceae</taxon>
        <taxon>Nemaliophycidae</taxon>
        <taxon>Palmariales</taxon>
        <taxon>Palmariaceae</taxon>
        <taxon>Palmaria</taxon>
    </lineage>
</organism>
<sequence>AVKYTVTLSTPGGVEEIEGDETTYVLDSAEDQGIDLPYSCRAGACSTCAGIVELGTVDQSDQSFLDDDQLNDSFVLTCVAYPTSDCQIKTHQEEKLY</sequence>
<reference key="1">
    <citation type="journal article" date="1984" name="Phytochemistry">
        <title>Amino acid sequence of a ferredoxin from Rhodymenia palmata, a red alga in the Florideophyceae.</title>
        <authorList>
            <person name="Inoue K."/>
            <person name="Hase T."/>
            <person name="Matsubara H."/>
            <person name="Fitzgerald M.P."/>
            <person name="Rogers L.J."/>
        </authorList>
    </citation>
    <scope>PROTEIN SEQUENCE</scope>
</reference>
<reference key="2">
    <citation type="journal article" date="1981" name="Phytochemistry">
        <title>Partial structure and properties of the ferredoxin from Rhodymenia palmata.</title>
        <authorList>
            <person name="Andrew P.W."/>
            <person name="Rogers L.J."/>
            <person name="Haslett B.G."/>
            <person name="Boulter D."/>
        </authorList>
    </citation>
    <scope>PROTEIN SEQUENCE OF 1-48</scope>
</reference>
<keyword id="KW-0001">2Fe-2S</keyword>
<keyword id="KW-0150">Chloroplast</keyword>
<keyword id="KW-0903">Direct protein sequencing</keyword>
<keyword id="KW-0249">Electron transport</keyword>
<keyword id="KW-0408">Iron</keyword>
<keyword id="KW-0411">Iron-sulfur</keyword>
<keyword id="KW-0479">Metal-binding</keyword>
<keyword id="KW-0934">Plastid</keyword>
<keyword id="KW-0813">Transport</keyword>
<proteinExistence type="evidence at protein level"/>
<evidence type="ECO:0000255" key="1">
    <source>
        <dbReference type="PROSITE-ProRule" id="PRU00465"/>
    </source>
</evidence>
<evidence type="ECO:0000305" key="2"/>
<comment type="function">
    <text>Ferredoxins are iron-sulfur proteins that transfer electrons in a wide variety of metabolic reactions.</text>
</comment>
<comment type="cofactor">
    <cofactor>
        <name>[2Fe-2S] cluster</name>
        <dbReference type="ChEBI" id="CHEBI:190135"/>
    </cofactor>
    <text>Binds 1 [2Fe-2S] cluster.</text>
</comment>
<comment type="subcellular location">
    <subcellularLocation>
        <location>Plastid</location>
        <location>Chloroplast</location>
    </subcellularLocation>
</comment>
<comment type="similarity">
    <text evidence="2">Belongs to the 2Fe2S plant-type ferredoxin family.</text>
</comment>
<accession>P07484</accession>
<protein>
    <recommendedName>
        <fullName>Ferredoxin</fullName>
    </recommendedName>
</protein>
<feature type="chain" id="PRO_0000189361" description="Ferredoxin">
    <location>
        <begin position="1"/>
        <end position="97"/>
    </location>
</feature>
<feature type="domain" description="2Fe-2S ferredoxin-type" evidence="1">
    <location>
        <begin position="4"/>
        <end position="94"/>
    </location>
</feature>
<feature type="binding site" evidence="1">
    <location>
        <position position="40"/>
    </location>
    <ligand>
        <name>[2Fe-2S] cluster</name>
        <dbReference type="ChEBI" id="CHEBI:190135"/>
    </ligand>
</feature>
<feature type="binding site" evidence="1">
    <location>
        <position position="45"/>
    </location>
    <ligand>
        <name>[2Fe-2S] cluster</name>
        <dbReference type="ChEBI" id="CHEBI:190135"/>
    </ligand>
</feature>
<feature type="binding site" evidence="1">
    <location>
        <position position="48"/>
    </location>
    <ligand>
        <name>[2Fe-2S] cluster</name>
        <dbReference type="ChEBI" id="CHEBI:190135"/>
    </ligand>
</feature>
<feature type="binding site" evidence="1">
    <location>
        <position position="78"/>
    </location>
    <ligand>
        <name>[2Fe-2S] cluster</name>
        <dbReference type="ChEBI" id="CHEBI:190135"/>
    </ligand>
</feature>
<dbReference type="PIR" id="A93760">
    <property type="entry name" value="FEPRR"/>
</dbReference>
<dbReference type="SMR" id="P07484"/>
<dbReference type="GO" id="GO:0009507">
    <property type="term" value="C:chloroplast"/>
    <property type="evidence" value="ECO:0007669"/>
    <property type="project" value="UniProtKB-SubCell"/>
</dbReference>
<dbReference type="GO" id="GO:0051537">
    <property type="term" value="F:2 iron, 2 sulfur cluster binding"/>
    <property type="evidence" value="ECO:0007669"/>
    <property type="project" value="UniProtKB-KW"/>
</dbReference>
<dbReference type="GO" id="GO:0009055">
    <property type="term" value="F:electron transfer activity"/>
    <property type="evidence" value="ECO:0007669"/>
    <property type="project" value="InterPro"/>
</dbReference>
<dbReference type="GO" id="GO:0046872">
    <property type="term" value="F:metal ion binding"/>
    <property type="evidence" value="ECO:0007669"/>
    <property type="project" value="UniProtKB-KW"/>
</dbReference>
<dbReference type="GO" id="GO:0022900">
    <property type="term" value="P:electron transport chain"/>
    <property type="evidence" value="ECO:0007669"/>
    <property type="project" value="InterPro"/>
</dbReference>
<dbReference type="CDD" id="cd00207">
    <property type="entry name" value="fer2"/>
    <property type="match status" value="1"/>
</dbReference>
<dbReference type="FunFam" id="3.10.20.30:FF:000014">
    <property type="entry name" value="Ferredoxin"/>
    <property type="match status" value="1"/>
</dbReference>
<dbReference type="Gene3D" id="3.10.20.30">
    <property type="match status" value="1"/>
</dbReference>
<dbReference type="InterPro" id="IPR036010">
    <property type="entry name" value="2Fe-2S_ferredoxin-like_sf"/>
</dbReference>
<dbReference type="InterPro" id="IPR001041">
    <property type="entry name" value="2Fe-2S_ferredoxin-type"/>
</dbReference>
<dbReference type="InterPro" id="IPR006058">
    <property type="entry name" value="2Fe2S_fd_BS"/>
</dbReference>
<dbReference type="InterPro" id="IPR012675">
    <property type="entry name" value="Beta-grasp_dom_sf"/>
</dbReference>
<dbReference type="InterPro" id="IPR010241">
    <property type="entry name" value="Fd_pln"/>
</dbReference>
<dbReference type="NCBIfam" id="TIGR02008">
    <property type="entry name" value="fdx_plant"/>
    <property type="match status" value="1"/>
</dbReference>
<dbReference type="PANTHER" id="PTHR43112">
    <property type="entry name" value="FERREDOXIN"/>
    <property type="match status" value="1"/>
</dbReference>
<dbReference type="PANTHER" id="PTHR43112:SF3">
    <property type="entry name" value="FERREDOXIN-2, CHLOROPLASTIC"/>
    <property type="match status" value="1"/>
</dbReference>
<dbReference type="Pfam" id="PF00111">
    <property type="entry name" value="Fer2"/>
    <property type="match status" value="1"/>
</dbReference>
<dbReference type="SUPFAM" id="SSF54292">
    <property type="entry name" value="2Fe-2S ferredoxin-like"/>
    <property type="match status" value="1"/>
</dbReference>
<dbReference type="PROSITE" id="PS00197">
    <property type="entry name" value="2FE2S_FER_1"/>
    <property type="match status" value="1"/>
</dbReference>
<dbReference type="PROSITE" id="PS51085">
    <property type="entry name" value="2FE2S_FER_2"/>
    <property type="match status" value="1"/>
</dbReference>